<name>C3H5_ARATH</name>
<feature type="chain" id="PRO_0000371966" description="Zinc finger CCCH domain-containing protein 5">
    <location>
        <begin position="1"/>
        <end position="757"/>
    </location>
</feature>
<feature type="domain" description="RRM" evidence="1">
    <location>
        <begin position="295"/>
        <end position="372"/>
    </location>
</feature>
<feature type="zinc finger region" description="C3H1-type 1" evidence="2">
    <location>
        <begin position="240"/>
        <end position="268"/>
    </location>
</feature>
<feature type="zinc finger region" description="C3H1-type 2" evidence="2">
    <location>
        <begin position="374"/>
        <end position="404"/>
    </location>
</feature>
<feature type="region of interest" description="Disordered" evidence="3">
    <location>
        <begin position="1"/>
        <end position="127"/>
    </location>
</feature>
<feature type="region of interest" description="Disordered" evidence="3">
    <location>
        <begin position="441"/>
        <end position="757"/>
    </location>
</feature>
<feature type="compositionally biased region" description="Basic and acidic residues" evidence="3">
    <location>
        <begin position="13"/>
        <end position="35"/>
    </location>
</feature>
<feature type="compositionally biased region" description="Basic residues" evidence="3">
    <location>
        <begin position="36"/>
        <end position="50"/>
    </location>
</feature>
<feature type="compositionally biased region" description="Basic and acidic residues" evidence="3">
    <location>
        <begin position="51"/>
        <end position="127"/>
    </location>
</feature>
<feature type="compositionally biased region" description="Polar residues" evidence="3">
    <location>
        <begin position="444"/>
        <end position="455"/>
    </location>
</feature>
<feature type="compositionally biased region" description="Basic and acidic residues" evidence="3">
    <location>
        <begin position="487"/>
        <end position="546"/>
    </location>
</feature>
<feature type="compositionally biased region" description="Basic residues" evidence="3">
    <location>
        <begin position="547"/>
        <end position="557"/>
    </location>
</feature>
<feature type="compositionally biased region" description="Basic residues" evidence="3">
    <location>
        <begin position="600"/>
        <end position="609"/>
    </location>
</feature>
<feature type="compositionally biased region" description="Basic and acidic residues" evidence="3">
    <location>
        <begin position="610"/>
        <end position="634"/>
    </location>
</feature>
<feature type="compositionally biased region" description="Basic and acidic residues" evidence="3">
    <location>
        <begin position="644"/>
        <end position="672"/>
    </location>
</feature>
<feature type="compositionally biased region" description="Basic and acidic residues" evidence="3">
    <location>
        <begin position="681"/>
        <end position="721"/>
    </location>
</feature>
<feature type="compositionally biased region" description="Basic residues" evidence="3">
    <location>
        <begin position="722"/>
        <end position="733"/>
    </location>
</feature>
<evidence type="ECO:0000255" key="1">
    <source>
        <dbReference type="PROSITE-ProRule" id="PRU00176"/>
    </source>
</evidence>
<evidence type="ECO:0000255" key="2">
    <source>
        <dbReference type="PROSITE-ProRule" id="PRU00723"/>
    </source>
</evidence>
<evidence type="ECO:0000256" key="3">
    <source>
        <dbReference type="SAM" id="MobiDB-lite"/>
    </source>
</evidence>
<evidence type="ECO:0000305" key="4"/>
<reference key="1">
    <citation type="journal article" date="2000" name="Nature">
        <title>Sequence and analysis of chromosome 1 of the plant Arabidopsis thaliana.</title>
        <authorList>
            <person name="Theologis A."/>
            <person name="Ecker J.R."/>
            <person name="Palm C.J."/>
            <person name="Federspiel N.A."/>
            <person name="Kaul S."/>
            <person name="White O."/>
            <person name="Alonso J."/>
            <person name="Altafi H."/>
            <person name="Araujo R."/>
            <person name="Bowman C.L."/>
            <person name="Brooks S.Y."/>
            <person name="Buehler E."/>
            <person name="Chan A."/>
            <person name="Chao Q."/>
            <person name="Chen H."/>
            <person name="Cheuk R.F."/>
            <person name="Chin C.W."/>
            <person name="Chung M.K."/>
            <person name="Conn L."/>
            <person name="Conway A.B."/>
            <person name="Conway A.R."/>
            <person name="Creasy T.H."/>
            <person name="Dewar K."/>
            <person name="Dunn P."/>
            <person name="Etgu P."/>
            <person name="Feldblyum T.V."/>
            <person name="Feng J.-D."/>
            <person name="Fong B."/>
            <person name="Fujii C.Y."/>
            <person name="Gill J.E."/>
            <person name="Goldsmith A.D."/>
            <person name="Haas B."/>
            <person name="Hansen N.F."/>
            <person name="Hughes B."/>
            <person name="Huizar L."/>
            <person name="Hunter J.L."/>
            <person name="Jenkins J."/>
            <person name="Johnson-Hopson C."/>
            <person name="Khan S."/>
            <person name="Khaykin E."/>
            <person name="Kim C.J."/>
            <person name="Koo H.L."/>
            <person name="Kremenetskaia I."/>
            <person name="Kurtz D.B."/>
            <person name="Kwan A."/>
            <person name="Lam B."/>
            <person name="Langin-Hooper S."/>
            <person name="Lee A."/>
            <person name="Lee J.M."/>
            <person name="Lenz C.A."/>
            <person name="Li J.H."/>
            <person name="Li Y.-P."/>
            <person name="Lin X."/>
            <person name="Liu S.X."/>
            <person name="Liu Z.A."/>
            <person name="Luros J.S."/>
            <person name="Maiti R."/>
            <person name="Marziali A."/>
            <person name="Militscher J."/>
            <person name="Miranda M."/>
            <person name="Nguyen M."/>
            <person name="Nierman W.C."/>
            <person name="Osborne B.I."/>
            <person name="Pai G."/>
            <person name="Peterson J."/>
            <person name="Pham P.K."/>
            <person name="Rizzo M."/>
            <person name="Rooney T."/>
            <person name="Rowley D."/>
            <person name="Sakano H."/>
            <person name="Salzberg S.L."/>
            <person name="Schwartz J.R."/>
            <person name="Shinn P."/>
            <person name="Southwick A.M."/>
            <person name="Sun H."/>
            <person name="Tallon L.J."/>
            <person name="Tambunga G."/>
            <person name="Toriumi M.J."/>
            <person name="Town C.D."/>
            <person name="Utterback T."/>
            <person name="Van Aken S."/>
            <person name="Vaysberg M."/>
            <person name="Vysotskaia V.S."/>
            <person name="Walker M."/>
            <person name="Wu D."/>
            <person name="Yu G."/>
            <person name="Fraser C.M."/>
            <person name="Venter J.C."/>
            <person name="Davis R.W."/>
        </authorList>
    </citation>
    <scope>NUCLEOTIDE SEQUENCE [LARGE SCALE GENOMIC DNA]</scope>
    <source>
        <strain>cv. Columbia</strain>
    </source>
</reference>
<reference key="2">
    <citation type="journal article" date="2017" name="Plant J.">
        <title>Araport11: a complete reannotation of the Arabidopsis thaliana reference genome.</title>
        <authorList>
            <person name="Cheng C.Y."/>
            <person name="Krishnakumar V."/>
            <person name="Chan A.P."/>
            <person name="Thibaud-Nissen F."/>
            <person name="Schobel S."/>
            <person name="Town C.D."/>
        </authorList>
    </citation>
    <scope>GENOME REANNOTATION</scope>
    <source>
        <strain>cv. Columbia</strain>
    </source>
</reference>
<reference key="3">
    <citation type="submission" date="2006-07" db="EMBL/GenBank/DDBJ databases">
        <title>Large-scale analysis of RIKEN Arabidopsis full-length (RAFL) cDNAs.</title>
        <authorList>
            <person name="Totoki Y."/>
            <person name="Seki M."/>
            <person name="Ishida J."/>
            <person name="Nakajima M."/>
            <person name="Enju A."/>
            <person name="Kamiya A."/>
            <person name="Narusaka M."/>
            <person name="Shin-i T."/>
            <person name="Nakagawa M."/>
            <person name="Sakamoto N."/>
            <person name="Oishi K."/>
            <person name="Kohara Y."/>
            <person name="Kobayashi M."/>
            <person name="Toyoda A."/>
            <person name="Sakaki Y."/>
            <person name="Sakurai T."/>
            <person name="Iida K."/>
            <person name="Akiyama K."/>
            <person name="Satou M."/>
            <person name="Toyoda T."/>
            <person name="Konagaya A."/>
            <person name="Carninci P."/>
            <person name="Kawai J."/>
            <person name="Hayashizaki Y."/>
            <person name="Shinozaki K."/>
        </authorList>
    </citation>
    <scope>NUCLEOTIDE SEQUENCE [LARGE SCALE MRNA]</scope>
    <source>
        <strain>cv. Columbia</strain>
    </source>
</reference>
<reference key="4">
    <citation type="journal article" date="2008" name="BMC Genomics">
        <title>Genome-wide analysis of CCCH zinc finger family in Arabidopsis and rice.</title>
        <authorList>
            <person name="Wang D."/>
            <person name="Guo Y."/>
            <person name="Wu C."/>
            <person name="Yang G."/>
            <person name="Li Y."/>
            <person name="Zheng C."/>
        </authorList>
    </citation>
    <scope>NOMENCLATURE</scope>
</reference>
<keyword id="KW-0238">DNA-binding</keyword>
<keyword id="KW-0479">Metal-binding</keyword>
<keyword id="KW-1185">Reference proteome</keyword>
<keyword id="KW-0677">Repeat</keyword>
<keyword id="KW-0694">RNA-binding</keyword>
<keyword id="KW-0862">Zinc</keyword>
<keyword id="KW-0863">Zinc-finger</keyword>
<dbReference type="EMBL" id="AC005489">
    <property type="protein sequence ID" value="AAD32882.1"/>
    <property type="status" value="ALT_SEQ"/>
    <property type="molecule type" value="Genomic_DNA"/>
</dbReference>
<dbReference type="EMBL" id="CP002684">
    <property type="protein sequence ID" value="AEE28565.1"/>
    <property type="molecule type" value="Genomic_DNA"/>
</dbReference>
<dbReference type="EMBL" id="AK226684">
    <property type="protein sequence ID" value="BAE98791.1"/>
    <property type="status" value="ALT_SEQ"/>
    <property type="molecule type" value="mRNA"/>
</dbReference>
<dbReference type="RefSeq" id="NP_172503.1">
    <property type="nucleotide sequence ID" value="NM_100906.1"/>
</dbReference>
<dbReference type="SMR" id="Q9SY74"/>
<dbReference type="BioGRID" id="22811">
    <property type="interactions" value="1"/>
</dbReference>
<dbReference type="FunCoup" id="Q9SY74">
    <property type="interactions" value="630"/>
</dbReference>
<dbReference type="STRING" id="3702.Q9SY74"/>
<dbReference type="GlyGen" id="Q9SY74">
    <property type="glycosylation" value="1 site"/>
</dbReference>
<dbReference type="iPTMnet" id="Q9SY74"/>
<dbReference type="PaxDb" id="3702-AT1G10320.1"/>
<dbReference type="ProteomicsDB" id="239083"/>
<dbReference type="EnsemblPlants" id="AT1G10320.1">
    <property type="protein sequence ID" value="AT1G10320.1"/>
    <property type="gene ID" value="AT1G10320"/>
</dbReference>
<dbReference type="GeneID" id="837571"/>
<dbReference type="Gramene" id="AT1G10320.1">
    <property type="protein sequence ID" value="AT1G10320.1"/>
    <property type="gene ID" value="AT1G10320"/>
</dbReference>
<dbReference type="KEGG" id="ath:AT1G10320"/>
<dbReference type="Araport" id="AT1G10320"/>
<dbReference type="TAIR" id="AT1G10320"/>
<dbReference type="eggNOG" id="KOG2202">
    <property type="taxonomic scope" value="Eukaryota"/>
</dbReference>
<dbReference type="HOGENOM" id="CLU_015692_1_0_1"/>
<dbReference type="InParanoid" id="Q9SY74"/>
<dbReference type="PhylomeDB" id="Q9SY74"/>
<dbReference type="PRO" id="PR:Q9SY74"/>
<dbReference type="Proteomes" id="UP000006548">
    <property type="component" value="Chromosome 1"/>
</dbReference>
<dbReference type="ExpressionAtlas" id="Q9SY74">
    <property type="expression patterns" value="baseline and differential"/>
</dbReference>
<dbReference type="GO" id="GO:0089701">
    <property type="term" value="C:U2AF complex"/>
    <property type="evidence" value="ECO:0007669"/>
    <property type="project" value="InterPro"/>
</dbReference>
<dbReference type="GO" id="GO:0003677">
    <property type="term" value="F:DNA binding"/>
    <property type="evidence" value="ECO:0007669"/>
    <property type="project" value="UniProtKB-KW"/>
</dbReference>
<dbReference type="GO" id="GO:0003723">
    <property type="term" value="F:RNA binding"/>
    <property type="evidence" value="ECO:0007669"/>
    <property type="project" value="UniProtKB-KW"/>
</dbReference>
<dbReference type="GO" id="GO:0008270">
    <property type="term" value="F:zinc ion binding"/>
    <property type="evidence" value="ECO:0007669"/>
    <property type="project" value="UniProtKB-KW"/>
</dbReference>
<dbReference type="GO" id="GO:0000398">
    <property type="term" value="P:mRNA splicing, via spliceosome"/>
    <property type="evidence" value="ECO:0007669"/>
    <property type="project" value="InterPro"/>
</dbReference>
<dbReference type="CDD" id="cd12540">
    <property type="entry name" value="RRM_U2AFBPL"/>
    <property type="match status" value="1"/>
</dbReference>
<dbReference type="FunFam" id="3.30.70.330:FF:000318">
    <property type="entry name" value="Zinc finger CCCH domain-containing protein 5"/>
    <property type="match status" value="1"/>
</dbReference>
<dbReference type="Gene3D" id="3.30.70.330">
    <property type="match status" value="1"/>
</dbReference>
<dbReference type="InterPro" id="IPR012677">
    <property type="entry name" value="Nucleotide-bd_a/b_plait_sf"/>
</dbReference>
<dbReference type="InterPro" id="IPR035979">
    <property type="entry name" value="RBD_domain_sf"/>
</dbReference>
<dbReference type="InterPro" id="IPR000504">
    <property type="entry name" value="RRM_dom"/>
</dbReference>
<dbReference type="InterPro" id="IPR003954">
    <property type="entry name" value="RRM_dom_euk"/>
</dbReference>
<dbReference type="InterPro" id="IPR009145">
    <property type="entry name" value="U2AF_small"/>
</dbReference>
<dbReference type="InterPro" id="IPR000571">
    <property type="entry name" value="Znf_CCCH"/>
</dbReference>
<dbReference type="PANTHER" id="PTHR12620">
    <property type="entry name" value="U2 SNRNP AUXILIARY FACTOR, SMALL SUBUNIT"/>
    <property type="match status" value="1"/>
</dbReference>
<dbReference type="Pfam" id="PF00076">
    <property type="entry name" value="RRM_1"/>
    <property type="match status" value="1"/>
</dbReference>
<dbReference type="Pfam" id="PF00642">
    <property type="entry name" value="zf-CCCH"/>
    <property type="match status" value="2"/>
</dbReference>
<dbReference type="PRINTS" id="PR01848">
    <property type="entry name" value="U2AUXFACTOR"/>
</dbReference>
<dbReference type="SMART" id="SM00361">
    <property type="entry name" value="RRM_1"/>
    <property type="match status" value="1"/>
</dbReference>
<dbReference type="SMART" id="SM00356">
    <property type="entry name" value="ZnF_C3H1"/>
    <property type="match status" value="2"/>
</dbReference>
<dbReference type="SUPFAM" id="SSF54928">
    <property type="entry name" value="RNA-binding domain, RBD"/>
    <property type="match status" value="1"/>
</dbReference>
<dbReference type="PROSITE" id="PS50102">
    <property type="entry name" value="RRM"/>
    <property type="match status" value="1"/>
</dbReference>
<dbReference type="PROSITE" id="PS50103">
    <property type="entry name" value="ZF_C3H1"/>
    <property type="match status" value="2"/>
</dbReference>
<gene>
    <name type="ordered locus">At1g10320</name>
    <name type="ORF">F14N23.20</name>
</gene>
<sequence>MEQANEKEEEERHEEAAGEKESFEESKEKAAEMSRKEKRKAMKKLKRKQVRKEIAAKEREEAKAKLNDPAEQERLKAIEEEDARRREKELKDFEESERAWREAMEIKRKKEEEEEAKREEEERRWKDLEELRKLEASGNDECGEDEDGEYEYIEEGPPEIIFQGNEIILKKNKVRVPKKSVVQVDGHESSNAEFVLQISDRPTSNPLPPGSEASANYQNVSSAQQILESVAQEVPNFGTEQDKAHCPFHLKTGACRFGQRCSRVHFYPNKSCTLLMKNMYNGPGITWEQDEGLEYTDEEAELCYEEFYEDVHTEFLKYGELVNFKVCRNGSFHLKGNVYVHYRSLESAILAYQSINGRYFAGKQVNCEFVNISRWKVAICGEYMKSRLKTCSRGSACNFIHCFRNPGGDYEWADHDRPPPRFWIHKMTSLFGYSDEKHMEHESSGSLNDSISDLSTDSHRQPSRRSRSRDHDHANVGSTPSYRSRKYHGDTQDSTREDKLRRHAENCHDGDDSPSRDGSLEREMYKERRYAKDTLHRDSRWSEHSPGHRVGRKRIHGRYSDDDSADGDDYGRRGTGHKRKPRRGTDSGVQEQMDNEKDRKTHRSSRKHSREGSSADKEEGHEHDRVHTVSDKSHRERSKHRHERSSSRYSHEEDSTESRHHQHKESDKKRSVETSPVGYQSDKDRDRSKQRQRYKSDDPESDQSRKGKRQSEENSDRETHKERRHRHRKRRRTQNSDDQNPKESEEVEEEIERWRPV</sequence>
<accession>Q9SY74</accession>
<accession>Q0WVQ7</accession>
<organism>
    <name type="scientific">Arabidopsis thaliana</name>
    <name type="common">Mouse-ear cress</name>
    <dbReference type="NCBI Taxonomy" id="3702"/>
    <lineage>
        <taxon>Eukaryota</taxon>
        <taxon>Viridiplantae</taxon>
        <taxon>Streptophyta</taxon>
        <taxon>Embryophyta</taxon>
        <taxon>Tracheophyta</taxon>
        <taxon>Spermatophyta</taxon>
        <taxon>Magnoliopsida</taxon>
        <taxon>eudicotyledons</taxon>
        <taxon>Gunneridae</taxon>
        <taxon>Pentapetalae</taxon>
        <taxon>rosids</taxon>
        <taxon>malvids</taxon>
        <taxon>Brassicales</taxon>
        <taxon>Brassicaceae</taxon>
        <taxon>Camelineae</taxon>
        <taxon>Arabidopsis</taxon>
    </lineage>
</organism>
<protein>
    <recommendedName>
        <fullName>Zinc finger CCCH domain-containing protein 5</fullName>
        <shortName>AtC3H5</shortName>
    </recommendedName>
</protein>
<comment type="sequence caution" evidence="4">
    <conflict type="erroneous gene model prediction">
        <sequence resource="EMBL-CDS" id="AAD32882"/>
    </conflict>
</comment>
<comment type="sequence caution" evidence="4">
    <conflict type="miscellaneous discrepancy">
        <sequence resource="EMBL-CDS" id="BAE98791"/>
    </conflict>
    <text>Intron retention.</text>
</comment>
<proteinExistence type="evidence at transcript level"/>